<sequence length="176" mass="19107">MTTIVSVRRNGHVVIAGDGQATLGNTVMKGNVKKVRRLYNDKVIAGFAGGTADAFTLFELFERKLEMHQGHLIKAAVELAKDWRTDRMLRKLEALLAVADETASLIITGNGDVVQPENDLIAIGSGGPYAQAAARALLENTELSAREIAEKALDIAGDICIYTNHFHTIEELSYKA</sequence>
<evidence type="ECO:0000255" key="1">
    <source>
        <dbReference type="HAMAP-Rule" id="MF_00248"/>
    </source>
</evidence>
<gene>
    <name evidence="1" type="primary">hslV</name>
    <name type="ordered locus">ECED1_4634</name>
</gene>
<feature type="chain" id="PRO_1000125408" description="ATP-dependent protease subunit HslV">
    <location>
        <begin position="1"/>
        <end position="176"/>
    </location>
</feature>
<feature type="active site" evidence="1">
    <location>
        <position position="2"/>
    </location>
</feature>
<feature type="binding site" evidence="1">
    <location>
        <position position="157"/>
    </location>
    <ligand>
        <name>Na(+)</name>
        <dbReference type="ChEBI" id="CHEBI:29101"/>
    </ligand>
</feature>
<feature type="binding site" evidence="1">
    <location>
        <position position="160"/>
    </location>
    <ligand>
        <name>Na(+)</name>
        <dbReference type="ChEBI" id="CHEBI:29101"/>
    </ligand>
</feature>
<feature type="binding site" evidence="1">
    <location>
        <position position="163"/>
    </location>
    <ligand>
        <name>Na(+)</name>
        <dbReference type="ChEBI" id="CHEBI:29101"/>
    </ligand>
</feature>
<keyword id="KW-0021">Allosteric enzyme</keyword>
<keyword id="KW-0963">Cytoplasm</keyword>
<keyword id="KW-0378">Hydrolase</keyword>
<keyword id="KW-0479">Metal-binding</keyword>
<keyword id="KW-0645">Protease</keyword>
<keyword id="KW-0915">Sodium</keyword>
<keyword id="KW-0346">Stress response</keyword>
<keyword id="KW-0888">Threonine protease</keyword>
<organism>
    <name type="scientific">Escherichia coli O81 (strain ED1a)</name>
    <dbReference type="NCBI Taxonomy" id="585397"/>
    <lineage>
        <taxon>Bacteria</taxon>
        <taxon>Pseudomonadati</taxon>
        <taxon>Pseudomonadota</taxon>
        <taxon>Gammaproteobacteria</taxon>
        <taxon>Enterobacterales</taxon>
        <taxon>Enterobacteriaceae</taxon>
        <taxon>Escherichia</taxon>
    </lineage>
</organism>
<protein>
    <recommendedName>
        <fullName evidence="1">ATP-dependent protease subunit HslV</fullName>
        <ecNumber evidence="1">3.4.25.2</ecNumber>
    </recommendedName>
    <alternativeName>
        <fullName evidence="1">Heat shock protein HslV</fullName>
    </alternativeName>
</protein>
<proteinExistence type="inferred from homology"/>
<dbReference type="EC" id="3.4.25.2" evidence="1"/>
<dbReference type="EMBL" id="CU928162">
    <property type="protein sequence ID" value="CAR10604.1"/>
    <property type="molecule type" value="Genomic_DNA"/>
</dbReference>
<dbReference type="RefSeq" id="WP_000208235.1">
    <property type="nucleotide sequence ID" value="NC_011745.1"/>
</dbReference>
<dbReference type="SMR" id="B7MR21"/>
<dbReference type="MEROPS" id="T01.006"/>
<dbReference type="KEGG" id="ecq:ECED1_4634"/>
<dbReference type="HOGENOM" id="CLU_093872_1_0_6"/>
<dbReference type="Proteomes" id="UP000000748">
    <property type="component" value="Chromosome"/>
</dbReference>
<dbReference type="GO" id="GO:0009376">
    <property type="term" value="C:HslUV protease complex"/>
    <property type="evidence" value="ECO:0007669"/>
    <property type="project" value="UniProtKB-UniRule"/>
</dbReference>
<dbReference type="GO" id="GO:0005839">
    <property type="term" value="C:proteasome core complex"/>
    <property type="evidence" value="ECO:0007669"/>
    <property type="project" value="InterPro"/>
</dbReference>
<dbReference type="GO" id="GO:0046872">
    <property type="term" value="F:metal ion binding"/>
    <property type="evidence" value="ECO:0007669"/>
    <property type="project" value="UniProtKB-KW"/>
</dbReference>
<dbReference type="GO" id="GO:0004298">
    <property type="term" value="F:threonine-type endopeptidase activity"/>
    <property type="evidence" value="ECO:0007669"/>
    <property type="project" value="UniProtKB-KW"/>
</dbReference>
<dbReference type="GO" id="GO:0051603">
    <property type="term" value="P:proteolysis involved in protein catabolic process"/>
    <property type="evidence" value="ECO:0007669"/>
    <property type="project" value="InterPro"/>
</dbReference>
<dbReference type="CDD" id="cd01913">
    <property type="entry name" value="protease_HslV"/>
    <property type="match status" value="1"/>
</dbReference>
<dbReference type="FunFam" id="3.60.20.10:FF:000002">
    <property type="entry name" value="ATP-dependent protease subunit HslV"/>
    <property type="match status" value="1"/>
</dbReference>
<dbReference type="Gene3D" id="3.60.20.10">
    <property type="entry name" value="Glutamine Phosphoribosylpyrophosphate, subunit 1, domain 1"/>
    <property type="match status" value="1"/>
</dbReference>
<dbReference type="HAMAP" id="MF_00248">
    <property type="entry name" value="HslV"/>
    <property type="match status" value="1"/>
</dbReference>
<dbReference type="InterPro" id="IPR022281">
    <property type="entry name" value="ATP-dep_Prtase_HsIV_su"/>
</dbReference>
<dbReference type="InterPro" id="IPR029055">
    <property type="entry name" value="Ntn_hydrolases_N"/>
</dbReference>
<dbReference type="InterPro" id="IPR001353">
    <property type="entry name" value="Proteasome_sua/b"/>
</dbReference>
<dbReference type="InterPro" id="IPR023333">
    <property type="entry name" value="Proteasome_suB-type"/>
</dbReference>
<dbReference type="NCBIfam" id="TIGR03692">
    <property type="entry name" value="ATP_dep_HslV"/>
    <property type="match status" value="1"/>
</dbReference>
<dbReference type="NCBIfam" id="NF003964">
    <property type="entry name" value="PRK05456.1"/>
    <property type="match status" value="1"/>
</dbReference>
<dbReference type="PANTHER" id="PTHR32194:SF0">
    <property type="entry name" value="ATP-DEPENDENT PROTEASE SUBUNIT HSLV"/>
    <property type="match status" value="1"/>
</dbReference>
<dbReference type="PANTHER" id="PTHR32194">
    <property type="entry name" value="METALLOPROTEASE TLDD"/>
    <property type="match status" value="1"/>
</dbReference>
<dbReference type="Pfam" id="PF00227">
    <property type="entry name" value="Proteasome"/>
    <property type="match status" value="1"/>
</dbReference>
<dbReference type="PIRSF" id="PIRSF039093">
    <property type="entry name" value="HslV"/>
    <property type="match status" value="1"/>
</dbReference>
<dbReference type="SUPFAM" id="SSF56235">
    <property type="entry name" value="N-terminal nucleophile aminohydrolases (Ntn hydrolases)"/>
    <property type="match status" value="1"/>
</dbReference>
<dbReference type="PROSITE" id="PS51476">
    <property type="entry name" value="PROTEASOME_BETA_2"/>
    <property type="match status" value="1"/>
</dbReference>
<name>HSLV_ECO81</name>
<comment type="function">
    <text evidence="1">Protease subunit of a proteasome-like degradation complex believed to be a general protein degrading machinery.</text>
</comment>
<comment type="catalytic activity">
    <reaction evidence="1">
        <text>ATP-dependent cleavage of peptide bonds with broad specificity.</text>
        <dbReference type="EC" id="3.4.25.2"/>
    </reaction>
</comment>
<comment type="activity regulation">
    <text evidence="1">Allosterically activated by HslU binding.</text>
</comment>
<comment type="subunit">
    <text evidence="1">A double ring-shaped homohexamer of HslV is capped on each side by a ring-shaped HslU homohexamer. The assembly of the HslU/HslV complex is dependent on binding of ATP.</text>
</comment>
<comment type="subcellular location">
    <subcellularLocation>
        <location evidence="1">Cytoplasm</location>
    </subcellularLocation>
</comment>
<comment type="induction">
    <text evidence="1">By heat shock.</text>
</comment>
<comment type="similarity">
    <text evidence="1">Belongs to the peptidase T1B family. HslV subfamily.</text>
</comment>
<reference key="1">
    <citation type="journal article" date="2009" name="PLoS Genet.">
        <title>Organised genome dynamics in the Escherichia coli species results in highly diverse adaptive paths.</title>
        <authorList>
            <person name="Touchon M."/>
            <person name="Hoede C."/>
            <person name="Tenaillon O."/>
            <person name="Barbe V."/>
            <person name="Baeriswyl S."/>
            <person name="Bidet P."/>
            <person name="Bingen E."/>
            <person name="Bonacorsi S."/>
            <person name="Bouchier C."/>
            <person name="Bouvet O."/>
            <person name="Calteau A."/>
            <person name="Chiapello H."/>
            <person name="Clermont O."/>
            <person name="Cruveiller S."/>
            <person name="Danchin A."/>
            <person name="Diard M."/>
            <person name="Dossat C."/>
            <person name="Karoui M.E."/>
            <person name="Frapy E."/>
            <person name="Garry L."/>
            <person name="Ghigo J.M."/>
            <person name="Gilles A.M."/>
            <person name="Johnson J."/>
            <person name="Le Bouguenec C."/>
            <person name="Lescat M."/>
            <person name="Mangenot S."/>
            <person name="Martinez-Jehanne V."/>
            <person name="Matic I."/>
            <person name="Nassif X."/>
            <person name="Oztas S."/>
            <person name="Petit M.A."/>
            <person name="Pichon C."/>
            <person name="Rouy Z."/>
            <person name="Ruf C.S."/>
            <person name="Schneider D."/>
            <person name="Tourret J."/>
            <person name="Vacherie B."/>
            <person name="Vallenet D."/>
            <person name="Medigue C."/>
            <person name="Rocha E.P.C."/>
            <person name="Denamur E."/>
        </authorList>
    </citation>
    <scope>NUCLEOTIDE SEQUENCE [LARGE SCALE GENOMIC DNA]</scope>
    <source>
        <strain>ED1a</strain>
    </source>
</reference>
<accession>B7MR21</accession>